<dbReference type="EMBL" id="U37274">
    <property type="protein sequence ID" value="AAC60066.1"/>
    <property type="molecule type" value="mRNA"/>
</dbReference>
<dbReference type="SMR" id="P79772"/>
<dbReference type="FunCoup" id="P79772">
    <property type="interactions" value="4"/>
</dbReference>
<dbReference type="STRING" id="9031.ENSGALP00000041809"/>
<dbReference type="VEuPathDB" id="HostDB:geneid_395794"/>
<dbReference type="InParanoid" id="P79772"/>
<dbReference type="OrthoDB" id="5402974at2759"/>
<dbReference type="Proteomes" id="UP000000539">
    <property type="component" value="Unassembled WGS sequence"/>
</dbReference>
<dbReference type="GO" id="GO:0005654">
    <property type="term" value="C:nucleoplasm"/>
    <property type="evidence" value="ECO:0000304"/>
    <property type="project" value="Reactome"/>
</dbReference>
<dbReference type="GO" id="GO:0003700">
    <property type="term" value="F:DNA-binding transcription factor activity"/>
    <property type="evidence" value="ECO:0000250"/>
    <property type="project" value="UniProtKB"/>
</dbReference>
<dbReference type="GO" id="GO:0000981">
    <property type="term" value="F:DNA-binding transcription factor activity, RNA polymerase II-specific"/>
    <property type="evidence" value="ECO:0000318"/>
    <property type="project" value="GO_Central"/>
</dbReference>
<dbReference type="GO" id="GO:0000978">
    <property type="term" value="F:RNA polymerase II cis-regulatory region sequence-specific DNA binding"/>
    <property type="evidence" value="ECO:0000318"/>
    <property type="project" value="GO_Central"/>
</dbReference>
<dbReference type="GO" id="GO:0009653">
    <property type="term" value="P:anatomical structure morphogenesis"/>
    <property type="evidence" value="ECO:0000318"/>
    <property type="project" value="GO_Central"/>
</dbReference>
<dbReference type="GO" id="GO:0030154">
    <property type="term" value="P:cell differentiation"/>
    <property type="evidence" value="ECO:0000318"/>
    <property type="project" value="GO_Central"/>
</dbReference>
<dbReference type="GO" id="GO:0043009">
    <property type="term" value="P:chordate embryonic development"/>
    <property type="evidence" value="ECO:0000314"/>
    <property type="project" value="UniProtKB"/>
</dbReference>
<dbReference type="GO" id="GO:0000122">
    <property type="term" value="P:negative regulation of transcription by RNA polymerase II"/>
    <property type="evidence" value="ECO:0000250"/>
    <property type="project" value="UniProtKB"/>
</dbReference>
<dbReference type="GO" id="GO:0045944">
    <property type="term" value="P:positive regulation of transcription by RNA polymerase II"/>
    <property type="evidence" value="ECO:0000250"/>
    <property type="project" value="UniProtKB"/>
</dbReference>
<dbReference type="GO" id="GO:0006357">
    <property type="term" value="P:regulation of transcription by RNA polymerase II"/>
    <property type="evidence" value="ECO:0000318"/>
    <property type="project" value="GO_Central"/>
</dbReference>
<dbReference type="CDD" id="cd20047">
    <property type="entry name" value="FH_FOXD3"/>
    <property type="match status" value="1"/>
</dbReference>
<dbReference type="FunFam" id="1.10.10.10:FF:000016">
    <property type="entry name" value="Forkhead box protein I1"/>
    <property type="match status" value="1"/>
</dbReference>
<dbReference type="Gene3D" id="1.10.10.10">
    <property type="entry name" value="Winged helix-like DNA-binding domain superfamily/Winged helix DNA-binding domain"/>
    <property type="match status" value="1"/>
</dbReference>
<dbReference type="InterPro" id="IPR047392">
    <property type="entry name" value="FH_FOXD3"/>
</dbReference>
<dbReference type="InterPro" id="IPR001766">
    <property type="entry name" value="Fork_head_dom"/>
</dbReference>
<dbReference type="InterPro" id="IPR050211">
    <property type="entry name" value="FOX_domain-containing"/>
</dbReference>
<dbReference type="InterPro" id="IPR018122">
    <property type="entry name" value="TF_fork_head_CS_1"/>
</dbReference>
<dbReference type="InterPro" id="IPR030456">
    <property type="entry name" value="TF_fork_head_CS_2"/>
</dbReference>
<dbReference type="InterPro" id="IPR036388">
    <property type="entry name" value="WH-like_DNA-bd_sf"/>
</dbReference>
<dbReference type="InterPro" id="IPR036390">
    <property type="entry name" value="WH_DNA-bd_sf"/>
</dbReference>
<dbReference type="PANTHER" id="PTHR11829">
    <property type="entry name" value="FORKHEAD BOX PROTEIN"/>
    <property type="match status" value="1"/>
</dbReference>
<dbReference type="PANTHER" id="PTHR11829:SF361">
    <property type="entry name" value="FORKHEAD BOX PROTEIN D4-LIKE 1"/>
    <property type="match status" value="1"/>
</dbReference>
<dbReference type="Pfam" id="PF00250">
    <property type="entry name" value="Forkhead"/>
    <property type="match status" value="1"/>
</dbReference>
<dbReference type="PRINTS" id="PR00053">
    <property type="entry name" value="FORKHEAD"/>
</dbReference>
<dbReference type="SMART" id="SM00339">
    <property type="entry name" value="FH"/>
    <property type="match status" value="1"/>
</dbReference>
<dbReference type="SUPFAM" id="SSF46785">
    <property type="entry name" value="Winged helix' DNA-binding domain"/>
    <property type="match status" value="1"/>
</dbReference>
<dbReference type="PROSITE" id="PS00657">
    <property type="entry name" value="FORK_HEAD_1"/>
    <property type="match status" value="1"/>
</dbReference>
<dbReference type="PROSITE" id="PS00658">
    <property type="entry name" value="FORK_HEAD_2"/>
    <property type="match status" value="1"/>
</dbReference>
<dbReference type="PROSITE" id="PS50039">
    <property type="entry name" value="FORK_HEAD_3"/>
    <property type="match status" value="1"/>
</dbReference>
<evidence type="ECO:0000255" key="1">
    <source>
        <dbReference type="PROSITE-ProRule" id="PRU00089"/>
    </source>
</evidence>
<evidence type="ECO:0000256" key="2">
    <source>
        <dbReference type="SAM" id="MobiDB-lite"/>
    </source>
</evidence>
<evidence type="ECO:0000269" key="3">
    <source>
    </source>
</evidence>
<evidence type="ECO:0000305" key="4"/>
<name>FOXD3_CHICK</name>
<comment type="function">
    <text evidence="3">Binds to the consensus sequence 5'-A[AT]T[AG]TTTGTTT-3' and acts as a transcriptional repressor. Also acts as a transcriptional activator. Promotes development of neural crest cells from neural tube progenitors. Restricts neural progenitor cells to the neural crest lineage while suppressing interneuron differentiation. Required for maintenance of pluripotent cells in the pre-implantation and peri-implantation stages of embryogenesis.</text>
</comment>
<comment type="subcellular location">
    <subcellularLocation>
        <location evidence="4">Nucleus</location>
    </subcellularLocation>
</comment>
<sequence length="394" mass="40995">MTLSGGGSDMSGQTALAAEDVDIDVVGEGDDAPGKDGDGEARSPAALPLPLDEAAEPGEPERAARRAAAARQPGPGRPEGGRGGGGGGGGGEEGASGGGAAAAAAAGQSKPKSSLVKPPYSYIALITMAILQSPQKKLTLSGICEFISNRFPYYREKFPAWQNSIRHNLSLNDCFVKIPREPGNPGKGNYWTLDPQSEDMFDNGSFLRRRKRFKRHQQEHLRDQTALMMQGFGAYGLAGPYGRPYGLPPGAYPHPAALQYPYIPPVGPMLPPACPLLPSGELSRKAFNAQLGPSLQLQLSSLGAAGSIVKSEPSSRPSFSIENIIGGPAASSAPSAQTFLRPPVTVQSGLVAHQPLALARTTAAIAPILSVPTNIIAGQFLQPPAAVQAKWPAQ</sequence>
<organism>
    <name type="scientific">Gallus gallus</name>
    <name type="common">Chicken</name>
    <dbReference type="NCBI Taxonomy" id="9031"/>
    <lineage>
        <taxon>Eukaryota</taxon>
        <taxon>Metazoa</taxon>
        <taxon>Chordata</taxon>
        <taxon>Craniata</taxon>
        <taxon>Vertebrata</taxon>
        <taxon>Euteleostomi</taxon>
        <taxon>Archelosauria</taxon>
        <taxon>Archosauria</taxon>
        <taxon>Dinosauria</taxon>
        <taxon>Saurischia</taxon>
        <taxon>Theropoda</taxon>
        <taxon>Coelurosauria</taxon>
        <taxon>Aves</taxon>
        <taxon>Neognathae</taxon>
        <taxon>Galloanserae</taxon>
        <taxon>Galliformes</taxon>
        <taxon>Phasianidae</taxon>
        <taxon>Phasianinae</taxon>
        <taxon>Gallus</taxon>
    </lineage>
</organism>
<feature type="chain" id="PRO_0000091820" description="Forkhead box protein D3">
    <location>
        <begin position="1"/>
        <end position="394"/>
    </location>
</feature>
<feature type="DNA-binding region" description="Fork-head" evidence="1">
    <location>
        <begin position="117"/>
        <end position="211"/>
    </location>
</feature>
<feature type="region of interest" description="Disordered" evidence="2">
    <location>
        <begin position="1"/>
        <end position="99"/>
    </location>
</feature>
<feature type="compositionally biased region" description="Acidic residues" evidence="2">
    <location>
        <begin position="19"/>
        <end position="31"/>
    </location>
</feature>
<feature type="compositionally biased region" description="Basic and acidic residues" evidence="2">
    <location>
        <begin position="32"/>
        <end position="41"/>
    </location>
</feature>
<feature type="compositionally biased region" description="Gly residues" evidence="2">
    <location>
        <begin position="77"/>
        <end position="99"/>
    </location>
</feature>
<protein>
    <recommendedName>
        <fullName>Forkhead box protein D3</fullName>
    </recommendedName>
    <alternativeName>
        <fullName>HNF3/FH transcription factor genesis</fullName>
    </alternativeName>
    <alternativeName>
        <fullName>Winged-helix protein CWH-3</fullName>
    </alternativeName>
</protein>
<accession>P79772</accession>
<proteinExistence type="evidence at transcript level"/>
<keyword id="KW-0010">Activator</keyword>
<keyword id="KW-0217">Developmental protein</keyword>
<keyword id="KW-0238">DNA-binding</keyword>
<keyword id="KW-0539">Nucleus</keyword>
<keyword id="KW-1185">Reference proteome</keyword>
<keyword id="KW-0678">Repressor</keyword>
<keyword id="KW-0804">Transcription</keyword>
<keyword id="KW-0805">Transcription regulation</keyword>
<reference key="1">
    <citation type="journal article" date="1997" name="Cancer Res.">
        <title>Aberrant cell growth induced by avian winged helix proteins.</title>
        <authorList>
            <person name="Freyaldenhoven B.S."/>
            <person name="Freyaldenhoven M.P."/>
            <person name="Iacovoni J.S."/>
            <person name="Vogt P.K."/>
        </authorList>
    </citation>
    <scope>NUCLEOTIDE SEQUENCE [MRNA]</scope>
    <source>
        <tissue>Embryo</tissue>
    </source>
</reference>
<reference key="2">
    <citation type="journal article" date="2001" name="Development">
        <title>The winged-helix transcription factor Foxd3 suppresses interneuron differentiation and promotes neural crest cell fate.</title>
        <authorList>
            <person name="Dottori M."/>
            <person name="Gross M.K."/>
            <person name="Labosky P."/>
            <person name="Goulding M."/>
        </authorList>
    </citation>
    <scope>FUNCTION</scope>
</reference>
<gene>
    <name type="primary">FOXD3</name>
</gene>